<name>G3P_COCHE</name>
<comment type="catalytic activity">
    <reaction evidence="2">
        <text>D-glyceraldehyde 3-phosphate + phosphate + NAD(+) = (2R)-3-phospho-glyceroyl phosphate + NADH + H(+)</text>
        <dbReference type="Rhea" id="RHEA:10300"/>
        <dbReference type="ChEBI" id="CHEBI:15378"/>
        <dbReference type="ChEBI" id="CHEBI:43474"/>
        <dbReference type="ChEBI" id="CHEBI:57540"/>
        <dbReference type="ChEBI" id="CHEBI:57604"/>
        <dbReference type="ChEBI" id="CHEBI:57945"/>
        <dbReference type="ChEBI" id="CHEBI:59776"/>
        <dbReference type="EC" id="1.2.1.12"/>
    </reaction>
</comment>
<comment type="pathway">
    <text>Carbohydrate degradation; glycolysis; pyruvate from D-glyceraldehyde 3-phosphate: step 1/5.</text>
</comment>
<comment type="subunit">
    <text>Homotetramer.</text>
</comment>
<comment type="subcellular location">
    <subcellularLocation>
        <location>Cytoplasm</location>
    </subcellularLocation>
</comment>
<comment type="similarity">
    <text evidence="3">Belongs to the glyceraldehyde-3-phosphate dehydrogenase family.</text>
</comment>
<keyword id="KW-0963">Cytoplasm</keyword>
<keyword id="KW-0324">Glycolysis</keyword>
<keyword id="KW-0520">NAD</keyword>
<keyword id="KW-0560">Oxidoreductase</keyword>
<reference key="1">
    <citation type="journal article" date="1992" name="Curr. Genet.">
        <title>Structure of the Cochliobolus heterostrophus glyceraldehyde-3-phosphate dehydrogenase gene.</title>
        <authorList>
            <person name="van Wert S.L."/>
            <person name="Yoder O.C."/>
        </authorList>
    </citation>
    <scope>NUCLEOTIDE SEQUENCE [GENOMIC DNA]</scope>
    <source>
        <strain>ATCC 48330 / C3</strain>
    </source>
</reference>
<feature type="chain" id="PRO_0000145545" description="Glyceraldehyde-3-phosphate dehydrogenase">
    <location>
        <begin position="1"/>
        <end position="337"/>
    </location>
</feature>
<feature type="active site" description="Nucleophile" evidence="2">
    <location>
        <position position="151"/>
    </location>
</feature>
<feature type="binding site" evidence="1">
    <location>
        <begin position="12"/>
        <end position="13"/>
    </location>
    <ligand>
        <name>NAD(+)</name>
        <dbReference type="ChEBI" id="CHEBI:57540"/>
    </ligand>
</feature>
<feature type="binding site" evidence="1">
    <location>
        <position position="34"/>
    </location>
    <ligand>
        <name>NAD(+)</name>
        <dbReference type="ChEBI" id="CHEBI:57540"/>
    </ligand>
</feature>
<feature type="binding site" evidence="1">
    <location>
        <position position="79"/>
    </location>
    <ligand>
        <name>NAD(+)</name>
        <dbReference type="ChEBI" id="CHEBI:57540"/>
    </ligand>
</feature>
<feature type="binding site" evidence="1">
    <location>
        <begin position="150"/>
        <end position="152"/>
    </location>
    <ligand>
        <name>D-glyceraldehyde 3-phosphate</name>
        <dbReference type="ChEBI" id="CHEBI:59776"/>
    </ligand>
</feature>
<feature type="binding site" evidence="1">
    <location>
        <position position="181"/>
    </location>
    <ligand>
        <name>D-glyceraldehyde 3-phosphate</name>
        <dbReference type="ChEBI" id="CHEBI:59776"/>
    </ligand>
</feature>
<feature type="binding site" evidence="1">
    <location>
        <begin position="210"/>
        <end position="211"/>
    </location>
    <ligand>
        <name>D-glyceraldehyde 3-phosphate</name>
        <dbReference type="ChEBI" id="CHEBI:59776"/>
    </ligand>
</feature>
<feature type="binding site" evidence="1">
    <location>
        <position position="233"/>
    </location>
    <ligand>
        <name>D-glyceraldehyde 3-phosphate</name>
        <dbReference type="ChEBI" id="CHEBI:59776"/>
    </ligand>
</feature>
<feature type="binding site" evidence="1">
    <location>
        <position position="315"/>
    </location>
    <ligand>
        <name>NAD(+)</name>
        <dbReference type="ChEBI" id="CHEBI:57540"/>
    </ligand>
</feature>
<feature type="site" description="Activates thiol group during catalysis" evidence="1">
    <location>
        <position position="178"/>
    </location>
</feature>
<accession>P29497</accession>
<gene>
    <name type="primary">GPD1</name>
</gene>
<evidence type="ECO:0000250" key="1"/>
<evidence type="ECO:0000255" key="2">
    <source>
        <dbReference type="PROSITE-ProRule" id="PRU10009"/>
    </source>
</evidence>
<evidence type="ECO:0000305" key="3"/>
<protein>
    <recommendedName>
        <fullName>Glyceraldehyde-3-phosphate dehydrogenase</fullName>
        <shortName>GAPDH</shortName>
        <ecNumber>1.2.1.12</ecNumber>
    </recommendedName>
</protein>
<dbReference type="EC" id="1.2.1.12"/>
<dbReference type="EMBL" id="X63516">
    <property type="protein sequence ID" value="CAA45084.1"/>
    <property type="molecule type" value="Genomic_DNA"/>
</dbReference>
<dbReference type="PIR" id="S26946">
    <property type="entry name" value="S26946"/>
</dbReference>
<dbReference type="SMR" id="P29497"/>
<dbReference type="UniPathway" id="UPA00109">
    <property type="reaction ID" value="UER00184"/>
</dbReference>
<dbReference type="GO" id="GO:0005829">
    <property type="term" value="C:cytosol"/>
    <property type="evidence" value="ECO:0007669"/>
    <property type="project" value="TreeGrafter"/>
</dbReference>
<dbReference type="GO" id="GO:0004365">
    <property type="term" value="F:glyceraldehyde-3-phosphate dehydrogenase (NAD+) (phosphorylating) activity"/>
    <property type="evidence" value="ECO:0007669"/>
    <property type="project" value="UniProtKB-EC"/>
</dbReference>
<dbReference type="GO" id="GO:0051287">
    <property type="term" value="F:NAD binding"/>
    <property type="evidence" value="ECO:0007669"/>
    <property type="project" value="InterPro"/>
</dbReference>
<dbReference type="GO" id="GO:0050661">
    <property type="term" value="F:NADP binding"/>
    <property type="evidence" value="ECO:0007669"/>
    <property type="project" value="InterPro"/>
</dbReference>
<dbReference type="GO" id="GO:0006006">
    <property type="term" value="P:glucose metabolic process"/>
    <property type="evidence" value="ECO:0007669"/>
    <property type="project" value="InterPro"/>
</dbReference>
<dbReference type="GO" id="GO:0006096">
    <property type="term" value="P:glycolytic process"/>
    <property type="evidence" value="ECO:0007669"/>
    <property type="project" value="UniProtKB-UniPathway"/>
</dbReference>
<dbReference type="CDD" id="cd18126">
    <property type="entry name" value="GAPDH_I_C"/>
    <property type="match status" value="1"/>
</dbReference>
<dbReference type="CDD" id="cd05214">
    <property type="entry name" value="GAPDH_I_N"/>
    <property type="match status" value="1"/>
</dbReference>
<dbReference type="FunFam" id="3.30.360.10:FF:000001">
    <property type="entry name" value="Glyceraldehyde-3-phosphate dehydrogenase"/>
    <property type="match status" value="1"/>
</dbReference>
<dbReference type="FunFam" id="3.40.50.720:FF:000020">
    <property type="entry name" value="Glyceraldehyde-3-phosphate dehydrogenase"/>
    <property type="match status" value="1"/>
</dbReference>
<dbReference type="Gene3D" id="3.30.360.10">
    <property type="entry name" value="Dihydrodipicolinate Reductase, domain 2"/>
    <property type="match status" value="1"/>
</dbReference>
<dbReference type="Gene3D" id="3.40.50.720">
    <property type="entry name" value="NAD(P)-binding Rossmann-like Domain"/>
    <property type="match status" value="1"/>
</dbReference>
<dbReference type="InterPro" id="IPR020831">
    <property type="entry name" value="GlycerAld/Erythrose_P_DH"/>
</dbReference>
<dbReference type="InterPro" id="IPR020830">
    <property type="entry name" value="GlycerAld_3-P_DH_AS"/>
</dbReference>
<dbReference type="InterPro" id="IPR020829">
    <property type="entry name" value="GlycerAld_3-P_DH_cat"/>
</dbReference>
<dbReference type="InterPro" id="IPR020828">
    <property type="entry name" value="GlycerAld_3-P_DH_NAD(P)-bd"/>
</dbReference>
<dbReference type="InterPro" id="IPR006424">
    <property type="entry name" value="Glyceraldehyde-3-P_DH_1"/>
</dbReference>
<dbReference type="InterPro" id="IPR036291">
    <property type="entry name" value="NAD(P)-bd_dom_sf"/>
</dbReference>
<dbReference type="NCBIfam" id="TIGR01534">
    <property type="entry name" value="GAPDH-I"/>
    <property type="match status" value="1"/>
</dbReference>
<dbReference type="PANTHER" id="PTHR10836">
    <property type="entry name" value="GLYCERALDEHYDE 3-PHOSPHATE DEHYDROGENASE"/>
    <property type="match status" value="1"/>
</dbReference>
<dbReference type="PANTHER" id="PTHR10836:SF76">
    <property type="entry name" value="GLYCERALDEHYDE-3-PHOSPHATE DEHYDROGENASE-RELATED"/>
    <property type="match status" value="1"/>
</dbReference>
<dbReference type="Pfam" id="PF02800">
    <property type="entry name" value="Gp_dh_C"/>
    <property type="match status" value="1"/>
</dbReference>
<dbReference type="Pfam" id="PF00044">
    <property type="entry name" value="Gp_dh_N"/>
    <property type="match status" value="1"/>
</dbReference>
<dbReference type="PIRSF" id="PIRSF000149">
    <property type="entry name" value="GAP_DH"/>
    <property type="match status" value="1"/>
</dbReference>
<dbReference type="PRINTS" id="PR00078">
    <property type="entry name" value="G3PDHDRGNASE"/>
</dbReference>
<dbReference type="SMART" id="SM00846">
    <property type="entry name" value="Gp_dh_N"/>
    <property type="match status" value="1"/>
</dbReference>
<dbReference type="SUPFAM" id="SSF55347">
    <property type="entry name" value="Glyceraldehyde-3-phosphate dehydrogenase-like, C-terminal domain"/>
    <property type="match status" value="1"/>
</dbReference>
<dbReference type="SUPFAM" id="SSF51735">
    <property type="entry name" value="NAD(P)-binding Rossmann-fold domains"/>
    <property type="match status" value="1"/>
</dbReference>
<dbReference type="PROSITE" id="PS00071">
    <property type="entry name" value="GAPDH"/>
    <property type="match status" value="1"/>
</dbReference>
<proteinExistence type="inferred from homology"/>
<organism>
    <name type="scientific">Cochliobolus heterostrophus</name>
    <name type="common">Southern corn leaf blight fungus</name>
    <name type="synonym">Bipolaris maydis</name>
    <dbReference type="NCBI Taxonomy" id="5016"/>
    <lineage>
        <taxon>Eukaryota</taxon>
        <taxon>Fungi</taxon>
        <taxon>Dikarya</taxon>
        <taxon>Ascomycota</taxon>
        <taxon>Pezizomycotina</taxon>
        <taxon>Dothideomycetes</taxon>
        <taxon>Pleosporomycetidae</taxon>
        <taxon>Pleosporales</taxon>
        <taxon>Pleosporineae</taxon>
        <taxon>Pleosporaceae</taxon>
        <taxon>Bipolaris</taxon>
    </lineage>
</organism>
<sequence length="337" mass="36545">MVVKVGINGFGRIGRIVFRNAIEHNDVDIVAVNDPFIEPHYAAYMLKYDSTHGQFKGDIKVDGNNLTVNGKTIRFHMEKDPANIPWSETGAYYVVESTGVFTTTEKAKAHLKGGAKKVVISAPSPDAPMFVMGVNHETYKPDIEALSNASCTTNCLAPLAKVIHDKYTIIEGLMTTIHSYTATQKVVDGPSAKDWRGGRTAAQNIIPSSTGAAKAVGKVIPELNGKLTGMAMRVPTANVSVVDLTVRIEKGASYDEIKQAVKEASEGSLNGILGYTEDDIVSTDLNGDNRSSIFDAKAGISLNKNFVKLVSWYDNEWGYSRRVLDLLVYIAKIDGNA</sequence>